<dbReference type="EC" id="2.4.1.21" evidence="1"/>
<dbReference type="EMBL" id="AE001363">
    <property type="protein sequence ID" value="AAD19086.1"/>
    <property type="molecule type" value="Genomic_DNA"/>
</dbReference>
<dbReference type="EMBL" id="AE002161">
    <property type="protein sequence ID" value="AAF38696.1"/>
    <property type="molecule type" value="Genomic_DNA"/>
</dbReference>
<dbReference type="EMBL" id="BA000008">
    <property type="protein sequence ID" value="BAA99156.1"/>
    <property type="molecule type" value="Genomic_DNA"/>
</dbReference>
<dbReference type="EMBL" id="AE009440">
    <property type="protein sequence ID" value="AAP98913.1"/>
    <property type="molecule type" value="Genomic_DNA"/>
</dbReference>
<dbReference type="PIR" id="B86609">
    <property type="entry name" value="B86609"/>
</dbReference>
<dbReference type="PIR" id="C72016">
    <property type="entry name" value="C72016"/>
</dbReference>
<dbReference type="RefSeq" id="NP_225143.1">
    <property type="nucleotide sequence ID" value="NC_000922.1"/>
</dbReference>
<dbReference type="RefSeq" id="WP_010883583.1">
    <property type="nucleotide sequence ID" value="NZ_LN847257.1"/>
</dbReference>
<dbReference type="SMR" id="Q9Z6V8"/>
<dbReference type="STRING" id="406984.CPK_ORF00362"/>
<dbReference type="CAZy" id="GT5">
    <property type="family name" value="Glycosyltransferase Family 5"/>
</dbReference>
<dbReference type="GeneID" id="45051004"/>
<dbReference type="KEGG" id="cpa:CP_0911"/>
<dbReference type="KEGG" id="cpj:glgA"/>
<dbReference type="KEGG" id="cpn:CPn_0948"/>
<dbReference type="KEGG" id="cpt:CpB0983"/>
<dbReference type="PATRIC" id="fig|115713.3.peg.1038"/>
<dbReference type="eggNOG" id="COG0297">
    <property type="taxonomic scope" value="Bacteria"/>
</dbReference>
<dbReference type="HOGENOM" id="CLU_009583_18_5_0"/>
<dbReference type="OrthoDB" id="9808590at2"/>
<dbReference type="UniPathway" id="UPA00164"/>
<dbReference type="Proteomes" id="UP000000583">
    <property type="component" value="Chromosome"/>
</dbReference>
<dbReference type="Proteomes" id="UP000000801">
    <property type="component" value="Chromosome"/>
</dbReference>
<dbReference type="GO" id="GO:0009011">
    <property type="term" value="F:alpha-1,4-glucan glucosyltransferase (ADP-glucose donor) activity"/>
    <property type="evidence" value="ECO:0007669"/>
    <property type="project" value="UniProtKB-UniRule"/>
</dbReference>
<dbReference type="GO" id="GO:0004373">
    <property type="term" value="F:alpha-1,4-glucan glucosyltransferase (UDP-glucose donor) activity"/>
    <property type="evidence" value="ECO:0007669"/>
    <property type="project" value="InterPro"/>
</dbReference>
<dbReference type="GO" id="GO:0005978">
    <property type="term" value="P:glycogen biosynthetic process"/>
    <property type="evidence" value="ECO:0007669"/>
    <property type="project" value="UniProtKB-UniRule"/>
</dbReference>
<dbReference type="CDD" id="cd03791">
    <property type="entry name" value="GT5_Glycogen_synthase_DULL1-like"/>
    <property type="match status" value="1"/>
</dbReference>
<dbReference type="Gene3D" id="3.40.50.2000">
    <property type="entry name" value="Glycogen Phosphorylase B"/>
    <property type="match status" value="2"/>
</dbReference>
<dbReference type="HAMAP" id="MF_00484">
    <property type="entry name" value="Glycogen_synth"/>
    <property type="match status" value="1"/>
</dbReference>
<dbReference type="InterPro" id="IPR001296">
    <property type="entry name" value="Glyco_trans_1"/>
</dbReference>
<dbReference type="InterPro" id="IPR011835">
    <property type="entry name" value="GS/SS"/>
</dbReference>
<dbReference type="InterPro" id="IPR013534">
    <property type="entry name" value="Starch_synth_cat_dom"/>
</dbReference>
<dbReference type="NCBIfam" id="TIGR02095">
    <property type="entry name" value="glgA"/>
    <property type="match status" value="1"/>
</dbReference>
<dbReference type="NCBIfam" id="NF001904">
    <property type="entry name" value="PRK00654.2-3"/>
    <property type="match status" value="1"/>
</dbReference>
<dbReference type="PANTHER" id="PTHR46083">
    <property type="match status" value="1"/>
</dbReference>
<dbReference type="PANTHER" id="PTHR46083:SF1">
    <property type="entry name" value="GLYCOGEN SYNTHASE 2-RELATED"/>
    <property type="match status" value="1"/>
</dbReference>
<dbReference type="Pfam" id="PF08323">
    <property type="entry name" value="Glyco_transf_5"/>
    <property type="match status" value="1"/>
</dbReference>
<dbReference type="Pfam" id="PF00534">
    <property type="entry name" value="Glycos_transf_1"/>
    <property type="match status" value="1"/>
</dbReference>
<dbReference type="SUPFAM" id="SSF53756">
    <property type="entry name" value="UDP-Glycosyltransferase/glycogen phosphorylase"/>
    <property type="match status" value="1"/>
</dbReference>
<feature type="chain" id="PRO_0000188604" description="Glycogen synthase">
    <location>
        <begin position="1"/>
        <end position="476"/>
    </location>
</feature>
<feature type="binding site" evidence="1">
    <location>
        <position position="15"/>
    </location>
    <ligand>
        <name>ADP-alpha-D-glucose</name>
        <dbReference type="ChEBI" id="CHEBI:57498"/>
    </ligand>
</feature>
<sequence>MRIVQVAVEFTPIVKVGGLGDAVASLSKELAKQNDVEVLLPHYPLISKFSSSQVLSERSFYYEFLGKQQASAISYSYEGLTLTIITLDSQIELFSTTSVYSENNVVRFSAFAAAAAAYLQEADPADIVHLHDWHVGLLAGLLKNPLNPVHSKIVFTIHNFGYRGYCSTQLLAASQIDDFHLSHYQLFRDPQTSVLMKGALYCSDYITTVSLTYVQEIINDYSDYELHDAILARNSVFSGIINGIDEDVWNPKTDPALAVQYDASLLSEPDVLFTKKEENRAVLYEKLGISSDYFPLICVISRIVEEKGPEFMKEIILHAMEHSYAFILIGTSQNEVLLNEFRNLQDCLASSPNIRLILDFNDPLARLTYAAADMICIPSHREACGLTQLIAMRYGTVPLVRKTGGLADTVIPGVNGFTFFDTNNFNEFRAMLSNAVTTYRQEPDVWLNLIESGMLRASGLDAMAKHYVNLYQSLLS</sequence>
<reference key="1">
    <citation type="journal article" date="1999" name="Nat. Genet.">
        <title>Comparative genomes of Chlamydia pneumoniae and C. trachomatis.</title>
        <authorList>
            <person name="Kalman S."/>
            <person name="Mitchell W.P."/>
            <person name="Marathe R."/>
            <person name="Lammel C.J."/>
            <person name="Fan J."/>
            <person name="Hyman R.W."/>
            <person name="Olinger L."/>
            <person name="Grimwood J."/>
            <person name="Davis R.W."/>
            <person name="Stephens R.S."/>
        </authorList>
    </citation>
    <scope>NUCLEOTIDE SEQUENCE [LARGE SCALE GENOMIC DNA]</scope>
    <source>
        <strain>CWL029</strain>
    </source>
</reference>
<reference key="2">
    <citation type="journal article" date="2000" name="Nucleic Acids Res.">
        <title>Genome sequences of Chlamydia trachomatis MoPn and Chlamydia pneumoniae AR39.</title>
        <authorList>
            <person name="Read T.D."/>
            <person name="Brunham R.C."/>
            <person name="Shen C."/>
            <person name="Gill S.R."/>
            <person name="Heidelberg J.F."/>
            <person name="White O."/>
            <person name="Hickey E.K."/>
            <person name="Peterson J.D."/>
            <person name="Utterback T.R."/>
            <person name="Berry K.J."/>
            <person name="Bass S."/>
            <person name="Linher K.D."/>
            <person name="Weidman J.F."/>
            <person name="Khouri H.M."/>
            <person name="Craven B."/>
            <person name="Bowman C."/>
            <person name="Dodson R.J."/>
            <person name="Gwinn M.L."/>
            <person name="Nelson W.C."/>
            <person name="DeBoy R.T."/>
            <person name="Kolonay J.F."/>
            <person name="McClarty G."/>
            <person name="Salzberg S.L."/>
            <person name="Eisen J.A."/>
            <person name="Fraser C.M."/>
        </authorList>
    </citation>
    <scope>NUCLEOTIDE SEQUENCE [LARGE SCALE GENOMIC DNA]</scope>
    <source>
        <strain>AR39</strain>
    </source>
</reference>
<reference key="3">
    <citation type="journal article" date="2000" name="Nucleic Acids Res.">
        <title>Comparison of whole genome sequences of Chlamydia pneumoniae J138 from Japan and CWL029 from USA.</title>
        <authorList>
            <person name="Shirai M."/>
            <person name="Hirakawa H."/>
            <person name="Kimoto M."/>
            <person name="Tabuchi M."/>
            <person name="Kishi F."/>
            <person name="Ouchi K."/>
            <person name="Shiba T."/>
            <person name="Ishii K."/>
            <person name="Hattori M."/>
            <person name="Kuhara S."/>
            <person name="Nakazawa T."/>
        </authorList>
    </citation>
    <scope>NUCLEOTIDE SEQUENCE [LARGE SCALE GENOMIC DNA]</scope>
    <source>
        <strain>J138</strain>
    </source>
</reference>
<reference key="4">
    <citation type="submission" date="2002-05" db="EMBL/GenBank/DDBJ databases">
        <title>The genome sequence of Chlamydia pneumoniae TW183 and comparison with other Chlamydia strains based on whole genome sequence analysis.</title>
        <authorList>
            <person name="Geng M.M."/>
            <person name="Schuhmacher A."/>
            <person name="Muehldorfer I."/>
            <person name="Bensch K.W."/>
            <person name="Schaefer K.P."/>
            <person name="Schneider S."/>
            <person name="Pohl T."/>
            <person name="Essig A."/>
            <person name="Marre R."/>
            <person name="Melchers K."/>
        </authorList>
    </citation>
    <scope>NUCLEOTIDE SEQUENCE [LARGE SCALE GENOMIC DNA]</scope>
    <source>
        <strain>TW-183</strain>
    </source>
</reference>
<accession>Q9Z6V8</accession>
<organism>
    <name type="scientific">Chlamydia pneumoniae</name>
    <name type="common">Chlamydophila pneumoniae</name>
    <dbReference type="NCBI Taxonomy" id="83558"/>
    <lineage>
        <taxon>Bacteria</taxon>
        <taxon>Pseudomonadati</taxon>
        <taxon>Chlamydiota</taxon>
        <taxon>Chlamydiia</taxon>
        <taxon>Chlamydiales</taxon>
        <taxon>Chlamydiaceae</taxon>
        <taxon>Chlamydia/Chlamydophila group</taxon>
        <taxon>Chlamydia</taxon>
    </lineage>
</organism>
<name>GLGA_CHLPN</name>
<proteinExistence type="inferred from homology"/>
<comment type="function">
    <text evidence="1">Synthesizes alpha-1,4-glucan chains using ADP-glucose.</text>
</comment>
<comment type="catalytic activity">
    <reaction evidence="1">
        <text>[(1-&gt;4)-alpha-D-glucosyl](n) + ADP-alpha-D-glucose = [(1-&gt;4)-alpha-D-glucosyl](n+1) + ADP + H(+)</text>
        <dbReference type="Rhea" id="RHEA:18189"/>
        <dbReference type="Rhea" id="RHEA-COMP:9584"/>
        <dbReference type="Rhea" id="RHEA-COMP:9587"/>
        <dbReference type="ChEBI" id="CHEBI:15378"/>
        <dbReference type="ChEBI" id="CHEBI:15444"/>
        <dbReference type="ChEBI" id="CHEBI:57498"/>
        <dbReference type="ChEBI" id="CHEBI:456216"/>
        <dbReference type="EC" id="2.4.1.21"/>
    </reaction>
</comment>
<comment type="pathway">
    <text evidence="1">Glycan biosynthesis; glycogen biosynthesis.</text>
</comment>
<comment type="similarity">
    <text evidence="1">Belongs to the glycosyltransferase 1 family. Bacterial/plant glycogen synthase subfamily.</text>
</comment>
<protein>
    <recommendedName>
        <fullName evidence="1">Glycogen synthase</fullName>
        <ecNumber evidence="1">2.4.1.21</ecNumber>
    </recommendedName>
    <alternativeName>
        <fullName evidence="1">Starch [bacterial glycogen] synthase</fullName>
    </alternativeName>
</protein>
<evidence type="ECO:0000255" key="1">
    <source>
        <dbReference type="HAMAP-Rule" id="MF_00484"/>
    </source>
</evidence>
<keyword id="KW-0320">Glycogen biosynthesis</keyword>
<keyword id="KW-0328">Glycosyltransferase</keyword>
<keyword id="KW-0808">Transferase</keyword>
<gene>
    <name evidence="1" type="primary">glgA</name>
    <name type="ordered locus">CPn_0948</name>
    <name type="ordered locus">CP_0911</name>
    <name type="ordered locus">CpB0983</name>
</gene>